<keyword id="KW-0903">Direct protein sequencing</keyword>
<keyword id="KW-1015">Disulfide bond</keyword>
<keyword id="KW-0333">Golgi apparatus</keyword>
<keyword id="KW-0378">Hydrolase</keyword>
<keyword id="KW-0611">Plant defense</keyword>
<keyword id="KW-0652">Protein synthesis inhibitor</keyword>
<keyword id="KW-0964">Secreted</keyword>
<keyword id="KW-0800">Toxin</keyword>
<keyword id="KW-0926">Vacuole</keyword>
<protein>
    <recommendedName>
        <fullName>Dioicin-2</fullName>
        <ecNumber>3.2.2.22</ecNumber>
    </recommendedName>
    <alternativeName>
        <fullName evidence="4">Ribosome-inactivating protein</fullName>
    </alternativeName>
    <alternativeName>
        <fullName evidence="4">rRNA N-glycosidase</fullName>
    </alternativeName>
</protein>
<evidence type="ECO:0000250" key="1">
    <source>
        <dbReference type="UniProtKB" id="P20656"/>
    </source>
</evidence>
<evidence type="ECO:0000255" key="2"/>
<evidence type="ECO:0000269" key="3">
    <source>
    </source>
</evidence>
<evidence type="ECO:0000303" key="4">
    <source>
    </source>
</evidence>
<evidence type="ECO:0000305" key="5"/>
<reference evidence="5" key="1">
    <citation type="journal article" date="2008" name="Planta">
        <title>Type 1 ribosome-inactivating proteins from Phytolacca dioica L. leaves: differential seasonal and age expression, and cellular localization.</title>
        <authorList>
            <person name="Parente A."/>
            <person name="Conforto B."/>
            <person name="Di Maro A."/>
            <person name="Chambery A."/>
            <person name="De Luca P."/>
            <person name="Bolognesi A."/>
            <person name="Iriti M."/>
            <person name="Faoro F."/>
        </authorList>
    </citation>
    <scope>PROTEIN SEQUENCE</scope>
    <scope>FUNCTION</scope>
    <scope>CATALYTIC ACTIVITY</scope>
    <scope>SUBCELLULAR LOCATION</scope>
    <scope>DEVELOPMENTAL STAGE</scope>
    <scope>MASS SPECTROMETRY</scope>
    <scope>DISULFIDE BONDS</scope>
    <source>
        <tissue evidence="3">Leaf</tissue>
    </source>
</reference>
<accession>P85208</accession>
<name>RIPD2_PHYDI</name>
<sequence>NIVFDVENATPETYSSFLTSLREAVKDKKSTCHGMIMATTTTELPKYVLVDLKLGSEKDAKTFTLAIRRGNLYLEGYSDIYNEKCRYRIFEDSESDAQQTVCPGDLTLPGSQNKIPYKKSYQSMESKGGDRTKLGLGQITLESRMNKIYGKDATDQKQFQKNEAEFLLIAVQMITEASRFKYIENKVKDSFDDAIGYKPDPKAISLETSWDKISNAIAKVNTPGNSIVTLPKGLLDENKKPWTTATMDELKNDIMGLLTHVTCKIK</sequence>
<proteinExistence type="evidence at protein level"/>
<dbReference type="EC" id="3.2.2.22"/>
<dbReference type="SMR" id="P85208"/>
<dbReference type="GO" id="GO:0005576">
    <property type="term" value="C:extracellular region"/>
    <property type="evidence" value="ECO:0007669"/>
    <property type="project" value="UniProtKB-SubCell"/>
</dbReference>
<dbReference type="GO" id="GO:0005794">
    <property type="term" value="C:Golgi apparatus"/>
    <property type="evidence" value="ECO:0007669"/>
    <property type="project" value="UniProtKB-SubCell"/>
</dbReference>
<dbReference type="GO" id="GO:0005773">
    <property type="term" value="C:vacuole"/>
    <property type="evidence" value="ECO:0007669"/>
    <property type="project" value="UniProtKB-SubCell"/>
</dbReference>
<dbReference type="GO" id="GO:0030598">
    <property type="term" value="F:rRNA N-glycosylase activity"/>
    <property type="evidence" value="ECO:0000314"/>
    <property type="project" value="UniProtKB"/>
</dbReference>
<dbReference type="GO" id="GO:0090729">
    <property type="term" value="F:toxin activity"/>
    <property type="evidence" value="ECO:0007669"/>
    <property type="project" value="UniProtKB-KW"/>
</dbReference>
<dbReference type="GO" id="GO:0006952">
    <property type="term" value="P:defense response"/>
    <property type="evidence" value="ECO:0007669"/>
    <property type="project" value="UniProtKB-KW"/>
</dbReference>
<dbReference type="GO" id="GO:0017148">
    <property type="term" value="P:negative regulation of translation"/>
    <property type="evidence" value="ECO:0007669"/>
    <property type="project" value="UniProtKB-KW"/>
</dbReference>
<dbReference type="FunFam" id="3.40.420.10:FF:000001">
    <property type="entry name" value="Ricin"/>
    <property type="match status" value="1"/>
</dbReference>
<dbReference type="Gene3D" id="3.40.420.10">
    <property type="entry name" value="Ricin (A subunit), domain 1"/>
    <property type="match status" value="1"/>
</dbReference>
<dbReference type="Gene3D" id="4.10.470.10">
    <property type="entry name" value="Ricin (A Subunit), domain 2"/>
    <property type="match status" value="1"/>
</dbReference>
<dbReference type="InterPro" id="IPR036041">
    <property type="entry name" value="Ribosome-inact_prot_sf"/>
</dbReference>
<dbReference type="InterPro" id="IPR017989">
    <property type="entry name" value="Ribosome_inactivat_1/2"/>
</dbReference>
<dbReference type="InterPro" id="IPR001574">
    <property type="entry name" value="Ribosome_inactivat_prot"/>
</dbReference>
<dbReference type="InterPro" id="IPR017988">
    <property type="entry name" value="Ribosome_inactivat_prot_CS"/>
</dbReference>
<dbReference type="InterPro" id="IPR016138">
    <property type="entry name" value="Ribosome_inactivat_prot_sub1"/>
</dbReference>
<dbReference type="InterPro" id="IPR016139">
    <property type="entry name" value="Ribosome_inactivat_prot_sub2"/>
</dbReference>
<dbReference type="PANTHER" id="PTHR33453">
    <property type="match status" value="1"/>
</dbReference>
<dbReference type="PANTHER" id="PTHR33453:SF34">
    <property type="entry name" value="RIBOSOME-INACTIVATING PROTEIN"/>
    <property type="match status" value="1"/>
</dbReference>
<dbReference type="Pfam" id="PF00161">
    <property type="entry name" value="RIP"/>
    <property type="match status" value="1"/>
</dbReference>
<dbReference type="PRINTS" id="PR00396">
    <property type="entry name" value="SHIGARICIN"/>
</dbReference>
<dbReference type="SUPFAM" id="SSF56371">
    <property type="entry name" value="Ribosome inactivating proteins (RIP)"/>
    <property type="match status" value="1"/>
</dbReference>
<dbReference type="PROSITE" id="PS00275">
    <property type="entry name" value="SHIGA_RICIN"/>
    <property type="match status" value="1"/>
</dbReference>
<feature type="chain" id="PRO_0000372680" description="Dioicin-2">
    <location>
        <begin position="1"/>
        <end position="266"/>
    </location>
</feature>
<feature type="active site" evidence="1">
    <location>
        <position position="176"/>
    </location>
</feature>
<feature type="disulfide bond" evidence="3">
    <location>
        <begin position="32"/>
        <end position="263"/>
    </location>
</feature>
<feature type="disulfide bond" evidence="3">
    <location>
        <begin position="85"/>
        <end position="102"/>
    </location>
</feature>
<comment type="function">
    <text evidence="3">Nicks pBR322 dsDNA. Has adenine polynucleotide glycosidase activity on herring sperm ssDNA.</text>
</comment>
<comment type="catalytic activity">
    <reaction evidence="3">
        <text>Endohydrolysis of the N-glycosidic bond at one specific adenosine on the 28S rRNA.</text>
        <dbReference type="EC" id="3.2.2.22"/>
    </reaction>
</comment>
<comment type="subcellular location">
    <subcellularLocation>
        <location evidence="3">Secreted</location>
        <location evidence="3">Extracellular space</location>
    </subcellularLocation>
    <subcellularLocation>
        <location evidence="3">Golgi apparatus</location>
    </subcellularLocation>
    <subcellularLocation>
        <location evidence="3">Vacuole</location>
    </subcellularLocation>
</comment>
<comment type="developmental stage">
    <text evidence="3">Detected in fully expanded leaves of 8 to 34 month old plants, levels peak in autumn. Also present in developing leaves (10-60 days old) of adult plants.</text>
</comment>
<comment type="mass spectrometry"/>
<comment type="similarity">
    <text evidence="2">Belongs to the ribosome-inactivating protein family. Type 1 RIP subfamily.</text>
</comment>
<organism>
    <name type="scientific">Phytolacca dioica</name>
    <name type="common">Bella sombra tree</name>
    <name type="synonym">Phytolacca arborea</name>
    <dbReference type="NCBI Taxonomy" id="29725"/>
    <lineage>
        <taxon>Eukaryota</taxon>
        <taxon>Viridiplantae</taxon>
        <taxon>Streptophyta</taxon>
        <taxon>Embryophyta</taxon>
        <taxon>Tracheophyta</taxon>
        <taxon>Spermatophyta</taxon>
        <taxon>Magnoliopsida</taxon>
        <taxon>eudicotyledons</taxon>
        <taxon>Gunneridae</taxon>
        <taxon>Pentapetalae</taxon>
        <taxon>Caryophyllales</taxon>
        <taxon>Phytolaccaceae</taxon>
        <taxon>Phytolacca</taxon>
    </lineage>
</organism>